<organism>
    <name type="scientific">Anoxybacillus flavithermus (strain DSM 21510 / WK1)</name>
    <dbReference type="NCBI Taxonomy" id="491915"/>
    <lineage>
        <taxon>Bacteria</taxon>
        <taxon>Bacillati</taxon>
        <taxon>Bacillota</taxon>
        <taxon>Bacilli</taxon>
        <taxon>Bacillales</taxon>
        <taxon>Anoxybacillaceae</taxon>
        <taxon>Anoxybacillus</taxon>
    </lineage>
</organism>
<gene>
    <name type="ordered locus">Aflv_1873</name>
</gene>
<protein>
    <recommendedName>
        <fullName evidence="1">UPF0358 protein Aflv_1873</fullName>
    </recommendedName>
</protein>
<dbReference type="EMBL" id="CP000922">
    <property type="protein sequence ID" value="ACJ34234.1"/>
    <property type="molecule type" value="Genomic_DNA"/>
</dbReference>
<dbReference type="RefSeq" id="WP_004891276.1">
    <property type="nucleotide sequence ID" value="NC_011567.1"/>
</dbReference>
<dbReference type="SMR" id="B7GGM5"/>
<dbReference type="STRING" id="491915.Aflv_1873"/>
<dbReference type="GeneID" id="7038126"/>
<dbReference type="KEGG" id="afl:Aflv_1873"/>
<dbReference type="eggNOG" id="COG4838">
    <property type="taxonomic scope" value="Bacteria"/>
</dbReference>
<dbReference type="HOGENOM" id="CLU_160493_1_0_9"/>
<dbReference type="Proteomes" id="UP000000742">
    <property type="component" value="Chromosome"/>
</dbReference>
<dbReference type="Gene3D" id="1.10.287.750">
    <property type="entry name" value="SO2669-like"/>
    <property type="match status" value="1"/>
</dbReference>
<dbReference type="HAMAP" id="MF_01560">
    <property type="entry name" value="UPF0358"/>
    <property type="match status" value="1"/>
</dbReference>
<dbReference type="InterPro" id="IPR009983">
    <property type="entry name" value="UPF0358"/>
</dbReference>
<dbReference type="InterPro" id="IPR036270">
    <property type="entry name" value="UPF0358_sf"/>
</dbReference>
<dbReference type="NCBIfam" id="NF010187">
    <property type="entry name" value="PRK13666.1"/>
    <property type="match status" value="1"/>
</dbReference>
<dbReference type="Pfam" id="PF07408">
    <property type="entry name" value="DUF1507"/>
    <property type="match status" value="1"/>
</dbReference>
<dbReference type="SUPFAM" id="SSF140404">
    <property type="entry name" value="EF2458-like"/>
    <property type="match status" value="1"/>
</dbReference>
<accession>B7GGM5</accession>
<comment type="similarity">
    <text evidence="1">Belongs to the UPF0358 family.</text>
</comment>
<evidence type="ECO:0000255" key="1">
    <source>
        <dbReference type="HAMAP-Rule" id="MF_01560"/>
    </source>
</evidence>
<name>Y1873_ANOFW</name>
<proteinExistence type="inferred from homology"/>
<sequence>MTPEVAINFRERAYSLLQADAEKIVKLIQVQMDHLTMPQCPLYEEVLDTQMFGLSREIDFAVRLGLVDEKDGKAILDRLERELSALHEACTKKKKK</sequence>
<reference key="1">
    <citation type="journal article" date="2008" name="Genome Biol.">
        <title>Encapsulated in silica: genome, proteome and physiology of the thermophilic bacterium Anoxybacillus flavithermus WK1.</title>
        <authorList>
            <person name="Saw J.H."/>
            <person name="Mountain B.W."/>
            <person name="Feng L."/>
            <person name="Omelchenko M.V."/>
            <person name="Hou S."/>
            <person name="Saito J.A."/>
            <person name="Stott M.B."/>
            <person name="Li D."/>
            <person name="Zhao G."/>
            <person name="Wu J."/>
            <person name="Galperin M.Y."/>
            <person name="Koonin E.V."/>
            <person name="Makarova K.S."/>
            <person name="Wolf Y.I."/>
            <person name="Rigden D.J."/>
            <person name="Dunfield P.F."/>
            <person name="Wang L."/>
            <person name="Alam M."/>
        </authorList>
    </citation>
    <scope>NUCLEOTIDE SEQUENCE [LARGE SCALE GENOMIC DNA]</scope>
    <source>
        <strain>DSM 21510 / WK1</strain>
    </source>
</reference>
<feature type="chain" id="PRO_1000185421" description="UPF0358 protein Aflv_1873">
    <location>
        <begin position="1"/>
        <end position="96"/>
    </location>
</feature>